<reference key="1">
    <citation type="journal article" date="1995" name="Virology">
        <title>Sequence of subterranean clover stunt virus DNA: affinities with the geminiviruses.</title>
        <authorList>
            <person name="Boevink P.C."/>
            <person name="Chu P.W.G."/>
            <person name="Keese P.K."/>
        </authorList>
    </citation>
    <scope>NUCLEOTIDE SEQUENCE [GENOMIC DNA]</scope>
</reference>
<feature type="chain" id="PRO_0000338628" description="Cell cycle link protein">
    <location>
        <begin position="1"/>
        <end position="164"/>
    </location>
</feature>
<feature type="region of interest" description="Binding to host SKP1 protein" evidence="2">
    <location>
        <begin position="9"/>
        <end position="22"/>
    </location>
</feature>
<feature type="short sequence motif" description="LXCXE motif, interaction with host RBR" evidence="1">
    <location>
        <begin position="111"/>
        <end position="115"/>
    </location>
</feature>
<gene>
    <name type="primary">DNA-C</name>
    <name type="synonym">C3</name>
</gene>
<evidence type="ECO:0000250" key="1"/>
<evidence type="ECO:0000255" key="2"/>
<evidence type="ECO:0000305" key="3"/>
<comment type="function">
    <text evidence="1">Interacts with and disrupts the function of host retinoblastoma-related proteins RBR, which are key regulators of the cell cycle. Induces transcriptional activation of E2F-regulated S-phase and G2/M-phase-specific genes. Inactivation of the ability of RBR to arrest the cell cycle leads to the stimulation of viral DNA replication (By similarity).</text>
</comment>
<comment type="subunit">
    <text evidence="1">Interacts with host SKP1. Interacts (via LXCXE domain) with host retinoblastoma-related protein 1 (RBR1). Interacts (via LXCXE domain) with retinoblastoma-related proteins (RBR) (By similarity).</text>
</comment>
<comment type="similarity">
    <text evidence="3">Belongs to the nanovirus Clink protein family.</text>
</comment>
<protein>
    <recommendedName>
        <fullName>Cell cycle link protein</fullName>
        <shortName>Clink</shortName>
    </recommendedName>
</protein>
<accession>Q87010</accession>
<keyword id="KW-0945">Host-virus interaction</keyword>
<keyword id="KW-1185">Reference proteome</keyword>
<proteinExistence type="inferred from homology"/>
<name>CLINK_SCSVF</name>
<organismHost>
    <name type="scientific">Trifolium subterraneum</name>
    <name type="common">Subterranean clover</name>
    <dbReference type="NCBI Taxonomy" id="3900"/>
</organismHost>
<sequence>MALRYFSHLPEELKEKIMNEHLKEIKKKEFLENVIKAACAVFEGLTKKESVEEDDILRFSGFLEGLSAYYAEATKKKCLVRWKKSVAINLKWRVMEEMHYKLYGFADMEDLYCSELGFPNYGEDDVAYHDGAIVNCKQLEVVFDDLGIEFMSIVIDRGSIKIEL</sequence>
<organism>
    <name type="scientific">Subterranean clover stunt virus (strain F)</name>
    <name type="common">SCSV</name>
    <dbReference type="NCBI Taxonomy" id="291607"/>
    <lineage>
        <taxon>Viruses</taxon>
        <taxon>Monodnaviria</taxon>
        <taxon>Shotokuvirae</taxon>
        <taxon>Cressdnaviricota</taxon>
        <taxon>Arfiviricetes</taxon>
        <taxon>Mulpavirales</taxon>
        <taxon>Nanoviridae</taxon>
        <taxon>Nanovirus</taxon>
        <taxon>Subterranean clover stunt virus</taxon>
    </lineage>
</organism>
<dbReference type="EMBL" id="U16732">
    <property type="protein sequence ID" value="AAA68019.1"/>
    <property type="molecule type" value="Genomic_DNA"/>
</dbReference>
<dbReference type="SMR" id="Q87010"/>
<dbReference type="Proteomes" id="UP001515400">
    <property type="component" value="Genome"/>
</dbReference>